<organism>
    <name type="scientific">Mus musculus</name>
    <name type="common">Mouse</name>
    <dbReference type="NCBI Taxonomy" id="10090"/>
    <lineage>
        <taxon>Eukaryota</taxon>
        <taxon>Metazoa</taxon>
        <taxon>Chordata</taxon>
        <taxon>Craniata</taxon>
        <taxon>Vertebrata</taxon>
        <taxon>Euteleostomi</taxon>
        <taxon>Mammalia</taxon>
        <taxon>Eutheria</taxon>
        <taxon>Euarchontoglires</taxon>
        <taxon>Glires</taxon>
        <taxon>Rodentia</taxon>
        <taxon>Myomorpha</taxon>
        <taxon>Muroidea</taxon>
        <taxon>Muridae</taxon>
        <taxon>Murinae</taxon>
        <taxon>Mus</taxon>
        <taxon>Mus</taxon>
    </lineage>
</organism>
<evidence type="ECO:0000250" key="1"/>
<evidence type="ECO:0000255" key="2">
    <source>
        <dbReference type="PROSITE-ProRule" id="PRU00191"/>
    </source>
</evidence>
<evidence type="ECO:0000255" key="3">
    <source>
        <dbReference type="PROSITE-ProRule" id="PRU00194"/>
    </source>
</evidence>
<evidence type="ECO:0000256" key="4">
    <source>
        <dbReference type="SAM" id="MobiDB-lite"/>
    </source>
</evidence>
<evidence type="ECO:0000269" key="5">
    <source>
    </source>
</evidence>
<evidence type="ECO:0000269" key="6">
    <source>
    </source>
</evidence>
<evidence type="ECO:0000269" key="7">
    <source>
    </source>
</evidence>
<evidence type="ECO:0000305" key="8"/>
<keyword id="KW-0341">Growth regulation</keyword>
<keyword id="KW-1185">Reference proteome</keyword>
<keyword id="KW-0727">SH2 domain</keyword>
<keyword id="KW-0734">Signal transduction inhibitor</keyword>
<keyword id="KW-0833">Ubl conjugation pathway</keyword>
<gene>
    <name type="primary">Socs6</name>
    <name type="synonym">Cis4</name>
    <name type="synonym">Cish4</name>
    <name type="synonym">Socs4</name>
</gene>
<feature type="chain" id="PRO_0000181252" description="Suppressor of cytokine signaling 6">
    <location>
        <begin position="1"/>
        <end position="533"/>
    </location>
</feature>
<feature type="domain" description="SH2" evidence="2">
    <location>
        <begin position="382"/>
        <end position="489"/>
    </location>
</feature>
<feature type="domain" description="SOCS box" evidence="3">
    <location>
        <begin position="484"/>
        <end position="533"/>
    </location>
</feature>
<feature type="region of interest" description="Disordered" evidence="4">
    <location>
        <begin position="54"/>
        <end position="136"/>
    </location>
</feature>
<feature type="region of interest" description="Disordered" evidence="4">
    <location>
        <begin position="177"/>
        <end position="199"/>
    </location>
</feature>
<feature type="compositionally biased region" description="Basic and acidic residues" evidence="4">
    <location>
        <begin position="59"/>
        <end position="69"/>
    </location>
</feature>
<feature type="compositionally biased region" description="Basic residues" evidence="4">
    <location>
        <begin position="76"/>
        <end position="88"/>
    </location>
</feature>
<feature type="compositionally biased region" description="Basic and acidic residues" evidence="4">
    <location>
        <begin position="177"/>
        <end position="189"/>
    </location>
</feature>
<feature type="sequence conflict" description="In Ref. 1; AAF28872." evidence="8" ref="1">
    <original>R</original>
    <variation>T</variation>
    <location>
        <position position="10"/>
    </location>
</feature>
<feature type="sequence conflict" description="In Ref. 1; AAF28872." evidence="8" ref="1">
    <original>T</original>
    <variation>S</variation>
    <location>
        <position position="92"/>
    </location>
</feature>
<feature type="sequence conflict" description="In Ref. 1; AAF28872." evidence="8" ref="1">
    <original>MRVK</original>
    <variation>IASE</variation>
    <location>
        <begin position="149"/>
        <end position="152"/>
    </location>
</feature>
<feature type="sequence conflict" description="In Ref. 2; BAB31956." evidence="8" ref="2">
    <original>L</original>
    <variation>I</variation>
    <location>
        <position position="308"/>
    </location>
</feature>
<sequence>MKKISLKTFRKSFNLSKSKDETEFMVVQPQSLAGDFVKDDSLFGSCYGKDMASCDIGSEDEKGKNRSKSESLMGTLKRRLSAKQKTKGKGGTASTDEDTFSSASAPGGLKDVRAPRPIRSTSLRSHHYSPTPWPLRPTSSEETCIKMEMRVKALVHAASPGPVNGVRKDLRELQPRELRDLQPEPRPESRCSPSSPGDLSLHLEEHVPVVIGLMSQDYLQYTVPLDDGMCPLEGPRSCCLDTSSPMEVSAVPLPGASGAFSEDDSHVDQDLVVGPEILVDSSVNNLLIGTTGVMLQSPRGGHDDAPPLSPLLPPMQNNPIQRNFSGLSGPDLHMAESVRCHLNFDPNSAPGVARVYDSVQSSGPMVVTSLTEELKKLAKQGWYWGPITRWEAEGKLANVPDGSFLVRDSSDDRYLLSLSFRSHGKTLHTRIEHSNGRFSFYEQPDVEGHTSIVDLIEHSIRDSENGAFCYSRSRLPGSATYPVRLTNPVSRFMQVRSLQYLCRFVIRQYTRIDLIQKLPLPNKMKDYLQEKHY</sequence>
<proteinExistence type="evidence at protein level"/>
<name>SOCS6_MOUSE</name>
<reference key="1">
    <citation type="submission" date="1999-01" db="EMBL/GenBank/DDBJ databases">
        <authorList>
            <person name="Choi Y.B."/>
            <person name="Yun Y."/>
        </authorList>
    </citation>
    <scope>NUCLEOTIDE SEQUENCE [MRNA]</scope>
    <source>
        <strain>C57BL/6J</strain>
        <tissue>T-cell lymphoma</tissue>
    </source>
</reference>
<reference key="2">
    <citation type="journal article" date="2005" name="Science">
        <title>The transcriptional landscape of the mammalian genome.</title>
        <authorList>
            <person name="Carninci P."/>
            <person name="Kasukawa T."/>
            <person name="Katayama S."/>
            <person name="Gough J."/>
            <person name="Frith M.C."/>
            <person name="Maeda N."/>
            <person name="Oyama R."/>
            <person name="Ravasi T."/>
            <person name="Lenhard B."/>
            <person name="Wells C."/>
            <person name="Kodzius R."/>
            <person name="Shimokawa K."/>
            <person name="Bajic V.B."/>
            <person name="Brenner S.E."/>
            <person name="Batalov S."/>
            <person name="Forrest A.R."/>
            <person name="Zavolan M."/>
            <person name="Davis M.J."/>
            <person name="Wilming L.G."/>
            <person name="Aidinis V."/>
            <person name="Allen J.E."/>
            <person name="Ambesi-Impiombato A."/>
            <person name="Apweiler R."/>
            <person name="Aturaliya R.N."/>
            <person name="Bailey T.L."/>
            <person name="Bansal M."/>
            <person name="Baxter L."/>
            <person name="Beisel K.W."/>
            <person name="Bersano T."/>
            <person name="Bono H."/>
            <person name="Chalk A.M."/>
            <person name="Chiu K.P."/>
            <person name="Choudhary V."/>
            <person name="Christoffels A."/>
            <person name="Clutterbuck D.R."/>
            <person name="Crowe M.L."/>
            <person name="Dalla E."/>
            <person name="Dalrymple B.P."/>
            <person name="de Bono B."/>
            <person name="Della Gatta G."/>
            <person name="di Bernardo D."/>
            <person name="Down T."/>
            <person name="Engstrom P."/>
            <person name="Fagiolini M."/>
            <person name="Faulkner G."/>
            <person name="Fletcher C.F."/>
            <person name="Fukushima T."/>
            <person name="Furuno M."/>
            <person name="Futaki S."/>
            <person name="Gariboldi M."/>
            <person name="Georgii-Hemming P."/>
            <person name="Gingeras T.R."/>
            <person name="Gojobori T."/>
            <person name="Green R.E."/>
            <person name="Gustincich S."/>
            <person name="Harbers M."/>
            <person name="Hayashi Y."/>
            <person name="Hensch T.K."/>
            <person name="Hirokawa N."/>
            <person name="Hill D."/>
            <person name="Huminiecki L."/>
            <person name="Iacono M."/>
            <person name="Ikeo K."/>
            <person name="Iwama A."/>
            <person name="Ishikawa T."/>
            <person name="Jakt M."/>
            <person name="Kanapin A."/>
            <person name="Katoh M."/>
            <person name="Kawasawa Y."/>
            <person name="Kelso J."/>
            <person name="Kitamura H."/>
            <person name="Kitano H."/>
            <person name="Kollias G."/>
            <person name="Krishnan S.P."/>
            <person name="Kruger A."/>
            <person name="Kummerfeld S.K."/>
            <person name="Kurochkin I.V."/>
            <person name="Lareau L.F."/>
            <person name="Lazarevic D."/>
            <person name="Lipovich L."/>
            <person name="Liu J."/>
            <person name="Liuni S."/>
            <person name="McWilliam S."/>
            <person name="Madan Babu M."/>
            <person name="Madera M."/>
            <person name="Marchionni L."/>
            <person name="Matsuda H."/>
            <person name="Matsuzawa S."/>
            <person name="Miki H."/>
            <person name="Mignone F."/>
            <person name="Miyake S."/>
            <person name="Morris K."/>
            <person name="Mottagui-Tabar S."/>
            <person name="Mulder N."/>
            <person name="Nakano N."/>
            <person name="Nakauchi H."/>
            <person name="Ng P."/>
            <person name="Nilsson R."/>
            <person name="Nishiguchi S."/>
            <person name="Nishikawa S."/>
            <person name="Nori F."/>
            <person name="Ohara O."/>
            <person name="Okazaki Y."/>
            <person name="Orlando V."/>
            <person name="Pang K.C."/>
            <person name="Pavan W.J."/>
            <person name="Pavesi G."/>
            <person name="Pesole G."/>
            <person name="Petrovsky N."/>
            <person name="Piazza S."/>
            <person name="Reed J."/>
            <person name="Reid J.F."/>
            <person name="Ring B.Z."/>
            <person name="Ringwald M."/>
            <person name="Rost B."/>
            <person name="Ruan Y."/>
            <person name="Salzberg S.L."/>
            <person name="Sandelin A."/>
            <person name="Schneider C."/>
            <person name="Schoenbach C."/>
            <person name="Sekiguchi K."/>
            <person name="Semple C.A."/>
            <person name="Seno S."/>
            <person name="Sessa L."/>
            <person name="Sheng Y."/>
            <person name="Shibata Y."/>
            <person name="Shimada H."/>
            <person name="Shimada K."/>
            <person name="Silva D."/>
            <person name="Sinclair B."/>
            <person name="Sperling S."/>
            <person name="Stupka E."/>
            <person name="Sugiura K."/>
            <person name="Sultana R."/>
            <person name="Takenaka Y."/>
            <person name="Taki K."/>
            <person name="Tammoja K."/>
            <person name="Tan S.L."/>
            <person name="Tang S."/>
            <person name="Taylor M.S."/>
            <person name="Tegner J."/>
            <person name="Teichmann S.A."/>
            <person name="Ueda H.R."/>
            <person name="van Nimwegen E."/>
            <person name="Verardo R."/>
            <person name="Wei C.L."/>
            <person name="Yagi K."/>
            <person name="Yamanishi H."/>
            <person name="Zabarovsky E."/>
            <person name="Zhu S."/>
            <person name="Zimmer A."/>
            <person name="Hide W."/>
            <person name="Bult C."/>
            <person name="Grimmond S.M."/>
            <person name="Teasdale R.D."/>
            <person name="Liu E.T."/>
            <person name="Brusic V."/>
            <person name="Quackenbush J."/>
            <person name="Wahlestedt C."/>
            <person name="Mattick J.S."/>
            <person name="Hume D.A."/>
            <person name="Kai C."/>
            <person name="Sasaki D."/>
            <person name="Tomaru Y."/>
            <person name="Fukuda S."/>
            <person name="Kanamori-Katayama M."/>
            <person name="Suzuki M."/>
            <person name="Aoki J."/>
            <person name="Arakawa T."/>
            <person name="Iida J."/>
            <person name="Imamura K."/>
            <person name="Itoh M."/>
            <person name="Kato T."/>
            <person name="Kawaji H."/>
            <person name="Kawagashira N."/>
            <person name="Kawashima T."/>
            <person name="Kojima M."/>
            <person name="Kondo S."/>
            <person name="Konno H."/>
            <person name="Nakano K."/>
            <person name="Ninomiya N."/>
            <person name="Nishio T."/>
            <person name="Okada M."/>
            <person name="Plessy C."/>
            <person name="Shibata K."/>
            <person name="Shiraki T."/>
            <person name="Suzuki S."/>
            <person name="Tagami M."/>
            <person name="Waki K."/>
            <person name="Watahiki A."/>
            <person name="Okamura-Oho Y."/>
            <person name="Suzuki H."/>
            <person name="Kawai J."/>
            <person name="Hayashizaki Y."/>
        </authorList>
    </citation>
    <scope>NUCLEOTIDE SEQUENCE [LARGE SCALE MRNA]</scope>
    <source>
        <strain>C57BL/6J</strain>
        <strain>NOD</strain>
        <tissue>Embryo</tissue>
        <tissue>Eye</tissue>
        <tissue>Spleen</tissue>
        <tissue>Thymus</tissue>
    </source>
</reference>
<reference key="3">
    <citation type="submission" date="2005-07" db="EMBL/GenBank/DDBJ databases">
        <authorList>
            <person name="Mural R.J."/>
            <person name="Adams M.D."/>
            <person name="Myers E.W."/>
            <person name="Smith H.O."/>
            <person name="Venter J.C."/>
        </authorList>
    </citation>
    <scope>NUCLEOTIDE SEQUENCE [LARGE SCALE GENOMIC DNA]</scope>
</reference>
<reference key="4">
    <citation type="journal article" date="2004" name="Genome Res.">
        <title>The status, quality, and expansion of the NIH full-length cDNA project: the Mammalian Gene Collection (MGC).</title>
        <authorList>
            <consortium name="The MGC Project Team"/>
        </authorList>
    </citation>
    <scope>NUCLEOTIDE SEQUENCE [LARGE SCALE MRNA]</scope>
    <source>
        <strain>Czech II</strain>
        <strain>FVB/N</strain>
        <tissue>Mammary tumor</tissue>
    </source>
</reference>
<reference key="5">
    <citation type="journal article" date="2002" name="Mol. Cell. Biol.">
        <title>SOCS-6 binds to insulin receptor substrate 4, and mice lacking the SOCS-6 gene exhibit mild growth retardation.</title>
        <authorList>
            <person name="Krebs D.L."/>
            <person name="Uren R.T."/>
            <person name="Metcalf D."/>
            <person name="Rakar S."/>
            <person name="Zhang J.-G."/>
            <person name="Starr R."/>
            <person name="De Souza D.P."/>
            <person name="Hanzinikolas K."/>
            <person name="Eyles J."/>
            <person name="Connolly L.M."/>
            <person name="Simpson R.J."/>
            <person name="Nicola N.A."/>
            <person name="Nicholson S.E."/>
            <person name="Baca M."/>
            <person name="Hilton D.J."/>
            <person name="Alexander W.S."/>
        </authorList>
    </citation>
    <scope>INTERACTION WITH IRS4</scope>
</reference>
<reference key="6">
    <citation type="journal article" date="2006" name="FEBS Lett.">
        <title>The E3 ubiquitin ligase HOIL-1 induces the polyubiquitination and degradation of SOCS6 associated proteins.</title>
        <authorList>
            <person name="Bayle J."/>
            <person name="Lopez S."/>
            <person name="Iwai K."/>
            <person name="Dubreuil P."/>
            <person name="De Sepulveda P."/>
        </authorList>
    </citation>
    <scope>FUNCTION AS E3 UBIQUITIN LIGASE</scope>
    <scope>INTERACTION WITH RBCK1</scope>
</reference>
<reference key="7">
    <citation type="journal article" date="2010" name="Islets">
        <title>Pim3 negatively regulates glucose-stimulated insulin secretion.</title>
        <authorList>
            <person name="Vlacich G."/>
            <person name="Nawijn M.C."/>
            <person name="Webb G.C."/>
            <person name="Steiner D.F."/>
        </authorList>
    </citation>
    <scope>INTERACTION WITH PIM3</scope>
</reference>
<dbReference type="EMBL" id="AF121907">
    <property type="protein sequence ID" value="AAF28872.1"/>
    <property type="molecule type" value="mRNA"/>
</dbReference>
<dbReference type="EMBL" id="AK019993">
    <property type="protein sequence ID" value="BAB31956.1"/>
    <property type="molecule type" value="mRNA"/>
</dbReference>
<dbReference type="EMBL" id="AK028665">
    <property type="protein sequence ID" value="BAC26055.1"/>
    <property type="molecule type" value="mRNA"/>
</dbReference>
<dbReference type="EMBL" id="AK028701">
    <property type="protein sequence ID" value="BAC26074.1"/>
    <property type="molecule type" value="mRNA"/>
</dbReference>
<dbReference type="EMBL" id="AK031164">
    <property type="protein sequence ID" value="BAC27287.1"/>
    <property type="molecule type" value="mRNA"/>
</dbReference>
<dbReference type="EMBL" id="AK044946">
    <property type="protein sequence ID" value="BAC32154.1"/>
    <property type="molecule type" value="mRNA"/>
</dbReference>
<dbReference type="EMBL" id="AK142069">
    <property type="protein sequence ID" value="BAE24930.1"/>
    <property type="molecule type" value="mRNA"/>
</dbReference>
<dbReference type="EMBL" id="AK156591">
    <property type="protein sequence ID" value="BAE33770.1"/>
    <property type="molecule type" value="mRNA"/>
</dbReference>
<dbReference type="EMBL" id="CH466632">
    <property type="protein sequence ID" value="EDL00645.1"/>
    <property type="molecule type" value="Genomic_DNA"/>
</dbReference>
<dbReference type="EMBL" id="CH466632">
    <property type="protein sequence ID" value="EDL00646.1"/>
    <property type="molecule type" value="Genomic_DNA"/>
</dbReference>
<dbReference type="EMBL" id="BC017597">
    <property type="protein sequence ID" value="AAH17597.1"/>
    <property type="molecule type" value="mRNA"/>
</dbReference>
<dbReference type="EMBL" id="BC094443">
    <property type="protein sequence ID" value="AAH94443.1"/>
    <property type="molecule type" value="mRNA"/>
</dbReference>
<dbReference type="CCDS" id="CCDS29389.1"/>
<dbReference type="RefSeq" id="NP_061291.2">
    <property type="nucleotide sequence ID" value="NM_018821.4"/>
</dbReference>
<dbReference type="RefSeq" id="XP_006526576.1">
    <property type="nucleotide sequence ID" value="XM_006526513.4"/>
</dbReference>
<dbReference type="RefSeq" id="XP_011245391.1">
    <property type="nucleotide sequence ID" value="XM_011247089.3"/>
</dbReference>
<dbReference type="RefSeq" id="XP_011245392.1">
    <property type="nucleotide sequence ID" value="XM_011247090.4"/>
</dbReference>
<dbReference type="RefSeq" id="XP_030106401.1">
    <property type="nucleotide sequence ID" value="XM_030250541.2"/>
</dbReference>
<dbReference type="SMR" id="Q9JLY0"/>
<dbReference type="BioGRID" id="207682">
    <property type="interactions" value="9"/>
</dbReference>
<dbReference type="FunCoup" id="Q9JLY0">
    <property type="interactions" value="618"/>
</dbReference>
<dbReference type="IntAct" id="Q9JLY0">
    <property type="interactions" value="3"/>
</dbReference>
<dbReference type="MINT" id="Q9JLY0"/>
<dbReference type="STRING" id="10090.ENSMUSP00000064929"/>
<dbReference type="iPTMnet" id="Q9JLY0"/>
<dbReference type="PhosphoSitePlus" id="Q9JLY0"/>
<dbReference type="jPOST" id="Q9JLY0"/>
<dbReference type="PaxDb" id="10090-ENSMUSP00000064929"/>
<dbReference type="PeptideAtlas" id="Q9JLY0"/>
<dbReference type="ProteomicsDB" id="261600"/>
<dbReference type="Pumba" id="Q9JLY0"/>
<dbReference type="Antibodypedia" id="4125">
    <property type="antibodies" value="213 antibodies from 31 providers"/>
</dbReference>
<dbReference type="DNASU" id="54607"/>
<dbReference type="Ensembl" id="ENSMUST00000070116.12">
    <property type="protein sequence ID" value="ENSMUSP00000064929.6"/>
    <property type="gene ID" value="ENSMUSG00000056153.16"/>
</dbReference>
<dbReference type="Ensembl" id="ENSMUST00000123826.2">
    <property type="protein sequence ID" value="ENSMUSP00000114993.2"/>
    <property type="gene ID" value="ENSMUSG00000056153.16"/>
</dbReference>
<dbReference type="Ensembl" id="ENSMUST00000125362.8">
    <property type="protein sequence ID" value="ENSMUSP00000118764.2"/>
    <property type="gene ID" value="ENSMUSG00000056153.16"/>
</dbReference>
<dbReference type="GeneID" id="54607"/>
<dbReference type="KEGG" id="mmu:54607"/>
<dbReference type="UCSC" id="uc008fvf.1">
    <property type="organism name" value="mouse"/>
</dbReference>
<dbReference type="AGR" id="MGI:1924885"/>
<dbReference type="CTD" id="9306"/>
<dbReference type="MGI" id="MGI:1924885">
    <property type="gene designation" value="Socs6"/>
</dbReference>
<dbReference type="VEuPathDB" id="HostDB:ENSMUSG00000056153"/>
<dbReference type="eggNOG" id="KOG4566">
    <property type="taxonomic scope" value="Eukaryota"/>
</dbReference>
<dbReference type="GeneTree" id="ENSGT00940000154847"/>
<dbReference type="HOGENOM" id="CLU_038160_0_0_1"/>
<dbReference type="InParanoid" id="Q9JLY0"/>
<dbReference type="OMA" id="PRVNHND"/>
<dbReference type="OrthoDB" id="6270897at2759"/>
<dbReference type="PhylomeDB" id="Q9JLY0"/>
<dbReference type="TreeFam" id="TF321368"/>
<dbReference type="Reactome" id="R-MMU-8951664">
    <property type="pathway name" value="Neddylation"/>
</dbReference>
<dbReference type="Reactome" id="R-MMU-9706369">
    <property type="pathway name" value="Negative regulation of FLT3"/>
</dbReference>
<dbReference type="UniPathway" id="UPA00143"/>
<dbReference type="BioGRID-ORCS" id="54607">
    <property type="hits" value="4 hits in 80 CRISPR screens"/>
</dbReference>
<dbReference type="ChiTaRS" id="Socs6">
    <property type="organism name" value="mouse"/>
</dbReference>
<dbReference type="PRO" id="PR:Q9JLY0"/>
<dbReference type="Proteomes" id="UP000000589">
    <property type="component" value="Chromosome 18"/>
</dbReference>
<dbReference type="RNAct" id="Q9JLY0">
    <property type="molecule type" value="protein"/>
</dbReference>
<dbReference type="Bgee" id="ENSMUSG00000056153">
    <property type="expression patterns" value="Expressed in ear vesicle and 259 other cell types or tissues"/>
</dbReference>
<dbReference type="ExpressionAtlas" id="Q9JLY0">
    <property type="expression patterns" value="baseline and differential"/>
</dbReference>
<dbReference type="GO" id="GO:0005829">
    <property type="term" value="C:cytosol"/>
    <property type="evidence" value="ECO:0000304"/>
    <property type="project" value="Reactome"/>
</dbReference>
<dbReference type="GO" id="GO:0001772">
    <property type="term" value="C:immunological synapse"/>
    <property type="evidence" value="ECO:0000266"/>
    <property type="project" value="MGI"/>
</dbReference>
<dbReference type="GO" id="GO:0035556">
    <property type="term" value="P:intracellular signal transduction"/>
    <property type="evidence" value="ECO:0007669"/>
    <property type="project" value="InterPro"/>
</dbReference>
<dbReference type="GO" id="GO:0009968">
    <property type="term" value="P:negative regulation of signal transduction"/>
    <property type="evidence" value="ECO:0007669"/>
    <property type="project" value="UniProtKB-KW"/>
</dbReference>
<dbReference type="GO" id="GO:0050868">
    <property type="term" value="P:negative regulation of T cell activation"/>
    <property type="evidence" value="ECO:0000314"/>
    <property type="project" value="MGI"/>
</dbReference>
<dbReference type="GO" id="GO:0010498">
    <property type="term" value="P:proteasomal protein catabolic process"/>
    <property type="evidence" value="ECO:0000266"/>
    <property type="project" value="MGI"/>
</dbReference>
<dbReference type="GO" id="GO:0016567">
    <property type="term" value="P:protein ubiquitination"/>
    <property type="evidence" value="ECO:0007669"/>
    <property type="project" value="UniProtKB-UniPathway"/>
</dbReference>
<dbReference type="GO" id="GO:0040008">
    <property type="term" value="P:regulation of growth"/>
    <property type="evidence" value="ECO:0000315"/>
    <property type="project" value="MGI"/>
</dbReference>
<dbReference type="CDD" id="cd10387">
    <property type="entry name" value="SH2_SOCS6"/>
    <property type="match status" value="1"/>
</dbReference>
<dbReference type="CDD" id="cd03740">
    <property type="entry name" value="SOCS_SOCS6"/>
    <property type="match status" value="1"/>
</dbReference>
<dbReference type="FunFam" id="1.10.750.20:FF:000002">
    <property type="entry name" value="Suppressor of cytokine signaling 2"/>
    <property type="match status" value="1"/>
</dbReference>
<dbReference type="FunFam" id="3.30.505.10:FF:000036">
    <property type="entry name" value="Suppressor of cytokine signaling 6"/>
    <property type="match status" value="1"/>
</dbReference>
<dbReference type="Gene3D" id="3.30.505.10">
    <property type="entry name" value="SH2 domain"/>
    <property type="match status" value="1"/>
</dbReference>
<dbReference type="Gene3D" id="1.10.750.20">
    <property type="entry name" value="SOCS box"/>
    <property type="match status" value="1"/>
</dbReference>
<dbReference type="InterPro" id="IPR000980">
    <property type="entry name" value="SH2"/>
</dbReference>
<dbReference type="InterPro" id="IPR036860">
    <property type="entry name" value="SH2_dom_sf"/>
</dbReference>
<dbReference type="InterPro" id="IPR035865">
    <property type="entry name" value="SOCS6_SH2"/>
</dbReference>
<dbReference type="InterPro" id="IPR037345">
    <property type="entry name" value="SOCS6_SOCS"/>
</dbReference>
<dbReference type="InterPro" id="IPR001496">
    <property type="entry name" value="SOCS_box"/>
</dbReference>
<dbReference type="InterPro" id="IPR036036">
    <property type="entry name" value="SOCS_box-like_dom_sf"/>
</dbReference>
<dbReference type="PANTHER" id="PTHR10155">
    <property type="entry name" value="PHOSPHATIDYLINOSITOL 3-KINASE REGULATORY SUBUNIT"/>
    <property type="match status" value="1"/>
</dbReference>
<dbReference type="PANTHER" id="PTHR10155:SF28">
    <property type="entry name" value="SUPPRESSOR OF CYTOKINE SIGNALING 6"/>
    <property type="match status" value="1"/>
</dbReference>
<dbReference type="Pfam" id="PF00017">
    <property type="entry name" value="SH2"/>
    <property type="match status" value="1"/>
</dbReference>
<dbReference type="Pfam" id="PF07525">
    <property type="entry name" value="SOCS_box"/>
    <property type="match status" value="1"/>
</dbReference>
<dbReference type="SMART" id="SM00252">
    <property type="entry name" value="SH2"/>
    <property type="match status" value="1"/>
</dbReference>
<dbReference type="SMART" id="SM00253">
    <property type="entry name" value="SOCS"/>
    <property type="match status" value="1"/>
</dbReference>
<dbReference type="SMART" id="SM00969">
    <property type="entry name" value="SOCS_box"/>
    <property type="match status" value="1"/>
</dbReference>
<dbReference type="SUPFAM" id="SSF55550">
    <property type="entry name" value="SH2 domain"/>
    <property type="match status" value="1"/>
</dbReference>
<dbReference type="SUPFAM" id="SSF158235">
    <property type="entry name" value="SOCS box-like"/>
    <property type="match status" value="1"/>
</dbReference>
<dbReference type="PROSITE" id="PS50001">
    <property type="entry name" value="SH2"/>
    <property type="match status" value="1"/>
</dbReference>
<dbReference type="PROSITE" id="PS50225">
    <property type="entry name" value="SOCS"/>
    <property type="match status" value="1"/>
</dbReference>
<accession>Q9JLY0</accession>
<accession>Q8VEN5</accession>
<accession>Q9D2A0</accession>
<protein>
    <recommendedName>
        <fullName>Suppressor of cytokine signaling 6</fullName>
        <shortName>SOCS-6</shortName>
    </recommendedName>
    <alternativeName>
        <fullName>Cytokine-inducible SH2 protein 4</fullName>
        <shortName>CIS-4</shortName>
    </alternativeName>
    <alternativeName>
        <fullName>Suppressor of cytokine signaling 4</fullName>
        <shortName>SOCS-4</shortName>
    </alternativeName>
</protein>
<comment type="function">
    <text evidence="1 6">SOCS family proteins form part of a classical negative feedback system that regulates cytokine signal transduction. May be a substrate recognition component of a SCF-like ECS (Elongin BC-CUL2/5-SOCS-box protein) E3 ubiquitin-protein ligase complex which mediates the ubiquitination and subsequent proteasomal degradation of target proteins. Regulates KIT degradation by ubiquitination of the tyrosine-phosphorylated receptor (By similarity).</text>
</comment>
<comment type="pathway">
    <text>Protein modification; protein ubiquitination.</text>
</comment>
<comment type="subunit">
    <text evidence="1 5 6 7">Interacts with KIT (phosphorylated) (By similarity). Interacts with RBCK1. Interacts with phosphorylated IRS4. Interacts with PIM3.</text>
</comment>
<comment type="interaction">
    <interactant intactId="EBI-8500205">
        <id>Q9JLY0</id>
    </interactant>
    <interactant intactId="EBI-2340624">
        <id>Q9BYM8</id>
        <label>RBCK1</label>
    </interactant>
    <organismsDiffer>true</organismsDiffer>
    <experiments>5</experiments>
</comment>
<comment type="domain">
    <text evidence="1">The SOCS box domain mediates the interaction with the Elongin BC complex, an adapter module in different E3 ubiquitin ligase complexes.</text>
</comment>